<proteinExistence type="inferred from homology"/>
<gene>
    <name evidence="1" type="primary">rplI</name>
    <name type="ordered locus">Caur_0950</name>
</gene>
<reference key="1">
    <citation type="journal article" date="2011" name="BMC Genomics">
        <title>Complete genome sequence of the filamentous anoxygenic phototrophic bacterium Chloroflexus aurantiacus.</title>
        <authorList>
            <person name="Tang K.H."/>
            <person name="Barry K."/>
            <person name="Chertkov O."/>
            <person name="Dalin E."/>
            <person name="Han C.S."/>
            <person name="Hauser L.J."/>
            <person name="Honchak B.M."/>
            <person name="Karbach L.E."/>
            <person name="Land M.L."/>
            <person name="Lapidus A."/>
            <person name="Larimer F.W."/>
            <person name="Mikhailova N."/>
            <person name="Pitluck S."/>
            <person name="Pierson B.K."/>
            <person name="Blankenship R.E."/>
        </authorList>
    </citation>
    <scope>NUCLEOTIDE SEQUENCE [LARGE SCALE GENOMIC DNA]</scope>
    <source>
        <strain>ATCC 29366 / DSM 635 / J-10-fl</strain>
    </source>
</reference>
<keyword id="KW-1185">Reference proteome</keyword>
<keyword id="KW-0687">Ribonucleoprotein</keyword>
<keyword id="KW-0689">Ribosomal protein</keyword>
<keyword id="KW-0694">RNA-binding</keyword>
<keyword id="KW-0699">rRNA-binding</keyword>
<protein>
    <recommendedName>
        <fullName evidence="1">Large ribosomal subunit protein bL9</fullName>
    </recommendedName>
    <alternativeName>
        <fullName evidence="2">50S ribosomal protein L9</fullName>
    </alternativeName>
</protein>
<evidence type="ECO:0000255" key="1">
    <source>
        <dbReference type="HAMAP-Rule" id="MF_00503"/>
    </source>
</evidence>
<evidence type="ECO:0000305" key="2"/>
<feature type="chain" id="PRO_1000081469" description="Large ribosomal subunit protein bL9">
    <location>
        <begin position="1"/>
        <end position="148"/>
    </location>
</feature>
<sequence>MKVLLLQDVEHLGKAGEIKDVSGGFGRNYLLPKGFAVLATKSQVKQAEERLAAQRRKAEAARKEAEALAARLAELTLTFTVKVGEQDRLYGSVTNADIAAKLHEVAGIEIDRRKIGLEDPIKRTGEYEVPVELMSGVSSTLKVVVVGE</sequence>
<organism>
    <name type="scientific">Chloroflexus aurantiacus (strain ATCC 29366 / DSM 635 / J-10-fl)</name>
    <dbReference type="NCBI Taxonomy" id="324602"/>
    <lineage>
        <taxon>Bacteria</taxon>
        <taxon>Bacillati</taxon>
        <taxon>Chloroflexota</taxon>
        <taxon>Chloroflexia</taxon>
        <taxon>Chloroflexales</taxon>
        <taxon>Chloroflexineae</taxon>
        <taxon>Chloroflexaceae</taxon>
        <taxon>Chloroflexus</taxon>
    </lineage>
</organism>
<accession>A9WHR4</accession>
<comment type="function">
    <text evidence="1">Binds to the 23S rRNA.</text>
</comment>
<comment type="similarity">
    <text evidence="1">Belongs to the bacterial ribosomal protein bL9 family.</text>
</comment>
<name>RL9_CHLAA</name>
<dbReference type="EMBL" id="CP000909">
    <property type="protein sequence ID" value="ABY34182.1"/>
    <property type="molecule type" value="Genomic_DNA"/>
</dbReference>
<dbReference type="RefSeq" id="YP_001634571.1">
    <property type="nucleotide sequence ID" value="NC_010175.1"/>
</dbReference>
<dbReference type="SMR" id="A9WHR4"/>
<dbReference type="FunCoup" id="A9WHR4">
    <property type="interactions" value="532"/>
</dbReference>
<dbReference type="STRING" id="324602.Caur_0950"/>
<dbReference type="EnsemblBacteria" id="ABY34182">
    <property type="protein sequence ID" value="ABY34182"/>
    <property type="gene ID" value="Caur_0950"/>
</dbReference>
<dbReference type="KEGG" id="cau:Caur_0950"/>
<dbReference type="PATRIC" id="fig|324602.8.peg.1085"/>
<dbReference type="eggNOG" id="COG0359">
    <property type="taxonomic scope" value="Bacteria"/>
</dbReference>
<dbReference type="HOGENOM" id="CLU_078938_3_0_0"/>
<dbReference type="InParanoid" id="A9WHR4"/>
<dbReference type="Proteomes" id="UP000002008">
    <property type="component" value="Chromosome"/>
</dbReference>
<dbReference type="GO" id="GO:0022625">
    <property type="term" value="C:cytosolic large ribosomal subunit"/>
    <property type="evidence" value="ECO:0000318"/>
    <property type="project" value="GO_Central"/>
</dbReference>
<dbReference type="GO" id="GO:0019843">
    <property type="term" value="F:rRNA binding"/>
    <property type="evidence" value="ECO:0007669"/>
    <property type="project" value="UniProtKB-UniRule"/>
</dbReference>
<dbReference type="GO" id="GO:0003735">
    <property type="term" value="F:structural constituent of ribosome"/>
    <property type="evidence" value="ECO:0007669"/>
    <property type="project" value="InterPro"/>
</dbReference>
<dbReference type="GO" id="GO:0006412">
    <property type="term" value="P:translation"/>
    <property type="evidence" value="ECO:0007669"/>
    <property type="project" value="UniProtKB-UniRule"/>
</dbReference>
<dbReference type="FunFam" id="3.10.430.100:FF:000006">
    <property type="entry name" value="50S ribosomal protein L9"/>
    <property type="match status" value="1"/>
</dbReference>
<dbReference type="FunFam" id="3.40.5.10:FF:000003">
    <property type="entry name" value="50S ribosomal protein L9"/>
    <property type="match status" value="1"/>
</dbReference>
<dbReference type="Gene3D" id="3.10.430.100">
    <property type="entry name" value="Ribosomal protein L9, C-terminal domain"/>
    <property type="match status" value="1"/>
</dbReference>
<dbReference type="Gene3D" id="3.40.5.10">
    <property type="entry name" value="Ribosomal protein L9, N-terminal domain"/>
    <property type="match status" value="1"/>
</dbReference>
<dbReference type="HAMAP" id="MF_00503">
    <property type="entry name" value="Ribosomal_bL9"/>
    <property type="match status" value="1"/>
</dbReference>
<dbReference type="InterPro" id="IPR000244">
    <property type="entry name" value="Ribosomal_bL9"/>
</dbReference>
<dbReference type="InterPro" id="IPR009027">
    <property type="entry name" value="Ribosomal_bL9/RNase_H1_N"/>
</dbReference>
<dbReference type="InterPro" id="IPR020594">
    <property type="entry name" value="Ribosomal_bL9_bac/chp"/>
</dbReference>
<dbReference type="InterPro" id="IPR020069">
    <property type="entry name" value="Ribosomal_bL9_C"/>
</dbReference>
<dbReference type="InterPro" id="IPR036791">
    <property type="entry name" value="Ribosomal_bL9_C_sf"/>
</dbReference>
<dbReference type="InterPro" id="IPR020070">
    <property type="entry name" value="Ribosomal_bL9_N"/>
</dbReference>
<dbReference type="InterPro" id="IPR036935">
    <property type="entry name" value="Ribosomal_bL9_N_sf"/>
</dbReference>
<dbReference type="NCBIfam" id="TIGR00158">
    <property type="entry name" value="L9"/>
    <property type="match status" value="1"/>
</dbReference>
<dbReference type="PANTHER" id="PTHR21368">
    <property type="entry name" value="50S RIBOSOMAL PROTEIN L9"/>
    <property type="match status" value="1"/>
</dbReference>
<dbReference type="Pfam" id="PF03948">
    <property type="entry name" value="Ribosomal_L9_C"/>
    <property type="match status" value="1"/>
</dbReference>
<dbReference type="Pfam" id="PF01281">
    <property type="entry name" value="Ribosomal_L9_N"/>
    <property type="match status" value="1"/>
</dbReference>
<dbReference type="SUPFAM" id="SSF55658">
    <property type="entry name" value="L9 N-domain-like"/>
    <property type="match status" value="1"/>
</dbReference>
<dbReference type="SUPFAM" id="SSF55653">
    <property type="entry name" value="Ribosomal protein L9 C-domain"/>
    <property type="match status" value="1"/>
</dbReference>
<dbReference type="PROSITE" id="PS00651">
    <property type="entry name" value="RIBOSOMAL_L9"/>
    <property type="match status" value="1"/>
</dbReference>